<sequence>MFNNILKQVGDYAKESLQAAKYIGQGLAVTFDHMSRRPITVQYPYEKLIPSERFRGRIHFEFDKCIACEVCVRVCPINLPVVDWEFNKAVKKKELKHYSIDFGVCIFCGNCVEYCPTNCLSMTEEYELAAYDRHDLNYDNVALGRLPYKVTEDPMVTPLRELGYLPKGVIEPHNLPKGSQRAGQHPEDLVKAE</sequence>
<accession>P26525</accession>
<reference key="1">
    <citation type="journal article" date="1992" name="Plant Mol. Biol.">
        <title>Cloning and transcription analysis of the ndh(A-I-G-E) gene cluster and the ndhD gene of the cyanobacterium Synechocystis sp. PCC6803.</title>
        <authorList>
            <person name="Ellersiek U."/>
            <person name="Steinmueller K."/>
        </authorList>
    </citation>
    <scope>NUCLEOTIDE SEQUENCE [GENOMIC DNA]</scope>
</reference>
<reference key="2">
    <citation type="journal article" date="1995" name="DNA Res.">
        <title>Sequence analysis of the genome of the unicellular cyanobacterium Synechocystis sp. strain PCC6803. I. Sequence features in the 1 Mb region from map positions 64% to 92% of the genome.</title>
        <authorList>
            <person name="Kaneko T."/>
            <person name="Tanaka A."/>
            <person name="Sato S."/>
            <person name="Kotani H."/>
            <person name="Sazuka T."/>
            <person name="Miyajima N."/>
            <person name="Sugiura M."/>
            <person name="Tabata S."/>
        </authorList>
    </citation>
    <scope>NUCLEOTIDE SEQUENCE [LARGE SCALE GENOMIC DNA]</scope>
    <source>
        <strain>ATCC 27184 / PCC 6803 / N-1</strain>
    </source>
</reference>
<reference key="3">
    <citation type="journal article" date="1996" name="DNA Res.">
        <title>Sequence analysis of the genome of the unicellular cyanobacterium Synechocystis sp. strain PCC6803. II. Sequence determination of the entire genome and assignment of potential protein-coding regions.</title>
        <authorList>
            <person name="Kaneko T."/>
            <person name="Sato S."/>
            <person name="Kotani H."/>
            <person name="Tanaka A."/>
            <person name="Asamizu E."/>
            <person name="Nakamura Y."/>
            <person name="Miyajima N."/>
            <person name="Hirosawa M."/>
            <person name="Sugiura M."/>
            <person name="Sasamoto S."/>
            <person name="Kimura T."/>
            <person name="Hosouchi T."/>
            <person name="Matsuno A."/>
            <person name="Muraki A."/>
            <person name="Nakazaki N."/>
            <person name="Naruo K."/>
            <person name="Okumura S."/>
            <person name="Shimpo S."/>
            <person name="Takeuchi C."/>
            <person name="Wada T."/>
            <person name="Watanabe A."/>
            <person name="Yamada M."/>
            <person name="Yasuda M."/>
            <person name="Tabata S."/>
        </authorList>
    </citation>
    <scope>NUCLEOTIDE SEQUENCE [LARGE SCALE GENOMIC DNA]</scope>
    <source>
        <strain>ATCC 27184 / PCC 6803 / Kazusa</strain>
    </source>
</reference>
<reference key="4">
    <citation type="journal article" date="1993" name="FEBS Lett.">
        <title>Immunopurification of a subcomplex of the NAD(P)H-plastoquinone-oxidoreductase from the cyanobacterium Synechocystis sp. PCC6803.</title>
        <authorList>
            <person name="Berger S."/>
            <person name="Ellersiek U."/>
            <person name="Kinzelt D."/>
            <person name="Steinmueller K."/>
        </authorList>
    </citation>
    <scope>PROTEIN SEQUENCE OF 1-25</scope>
</reference>
<name>NDHI_SYNY3</name>
<gene>
    <name evidence="1" type="primary">ndhI</name>
    <name type="ordered locus">sll0520</name>
</gene>
<feature type="chain" id="PRO_0000118717" description="NAD(P)H-quinone oxidoreductase subunit I">
    <location>
        <begin position="1"/>
        <end position="193"/>
    </location>
</feature>
<feature type="domain" description="4Fe-4S ferredoxin-type 1" evidence="1">
    <location>
        <begin position="56"/>
        <end position="85"/>
    </location>
</feature>
<feature type="domain" description="4Fe-4S ferredoxin-type 2" evidence="1">
    <location>
        <begin position="96"/>
        <end position="125"/>
    </location>
</feature>
<feature type="region of interest" description="Disordered" evidence="2">
    <location>
        <begin position="174"/>
        <end position="193"/>
    </location>
</feature>
<feature type="compositionally biased region" description="Basic and acidic residues" evidence="2">
    <location>
        <begin position="184"/>
        <end position="193"/>
    </location>
</feature>
<feature type="binding site" evidence="1">
    <location>
        <position position="65"/>
    </location>
    <ligand>
        <name>[4Fe-4S] cluster</name>
        <dbReference type="ChEBI" id="CHEBI:49883"/>
        <label>1</label>
    </ligand>
</feature>
<feature type="binding site" evidence="1">
    <location>
        <position position="68"/>
    </location>
    <ligand>
        <name>[4Fe-4S] cluster</name>
        <dbReference type="ChEBI" id="CHEBI:49883"/>
        <label>1</label>
    </ligand>
</feature>
<feature type="binding site" evidence="1">
    <location>
        <position position="71"/>
    </location>
    <ligand>
        <name>[4Fe-4S] cluster</name>
        <dbReference type="ChEBI" id="CHEBI:49883"/>
        <label>1</label>
    </ligand>
</feature>
<feature type="binding site" evidence="1">
    <location>
        <position position="75"/>
    </location>
    <ligand>
        <name>[4Fe-4S] cluster</name>
        <dbReference type="ChEBI" id="CHEBI:49883"/>
        <label>2</label>
    </ligand>
</feature>
<feature type="binding site" evidence="1">
    <location>
        <position position="105"/>
    </location>
    <ligand>
        <name>[4Fe-4S] cluster</name>
        <dbReference type="ChEBI" id="CHEBI:49883"/>
        <label>2</label>
    </ligand>
</feature>
<feature type="binding site" evidence="1">
    <location>
        <position position="108"/>
    </location>
    <ligand>
        <name>[4Fe-4S] cluster</name>
        <dbReference type="ChEBI" id="CHEBI:49883"/>
        <label>2</label>
    </ligand>
</feature>
<feature type="binding site" evidence="1">
    <location>
        <position position="111"/>
    </location>
    <ligand>
        <name>[4Fe-4S] cluster</name>
        <dbReference type="ChEBI" id="CHEBI:49883"/>
        <label>2</label>
    </ligand>
</feature>
<feature type="binding site" evidence="1">
    <location>
        <position position="115"/>
    </location>
    <ligand>
        <name>[4Fe-4S] cluster</name>
        <dbReference type="ChEBI" id="CHEBI:49883"/>
        <label>1</label>
    </ligand>
</feature>
<comment type="function">
    <text evidence="1">NDH-1 shuttles electrons from an unknown electron donor, via FMN and iron-sulfur (Fe-S) centers, to quinones in the respiratory and/or the photosynthetic chain. The immediate electron acceptor for the enzyme in this species is believed to be plastoquinone. Couples the redox reaction to proton translocation, and thus conserves the redox energy in a proton gradient.</text>
</comment>
<comment type="catalytic activity">
    <reaction evidence="1">
        <text>a plastoquinone + NADH + (n+1) H(+)(in) = a plastoquinol + NAD(+) + n H(+)(out)</text>
        <dbReference type="Rhea" id="RHEA:42608"/>
        <dbReference type="Rhea" id="RHEA-COMP:9561"/>
        <dbReference type="Rhea" id="RHEA-COMP:9562"/>
        <dbReference type="ChEBI" id="CHEBI:15378"/>
        <dbReference type="ChEBI" id="CHEBI:17757"/>
        <dbReference type="ChEBI" id="CHEBI:57540"/>
        <dbReference type="ChEBI" id="CHEBI:57945"/>
        <dbReference type="ChEBI" id="CHEBI:62192"/>
    </reaction>
</comment>
<comment type="catalytic activity">
    <reaction evidence="1">
        <text>a plastoquinone + NADPH + (n+1) H(+)(in) = a plastoquinol + NADP(+) + n H(+)(out)</text>
        <dbReference type="Rhea" id="RHEA:42612"/>
        <dbReference type="Rhea" id="RHEA-COMP:9561"/>
        <dbReference type="Rhea" id="RHEA-COMP:9562"/>
        <dbReference type="ChEBI" id="CHEBI:15378"/>
        <dbReference type="ChEBI" id="CHEBI:17757"/>
        <dbReference type="ChEBI" id="CHEBI:57783"/>
        <dbReference type="ChEBI" id="CHEBI:58349"/>
        <dbReference type="ChEBI" id="CHEBI:62192"/>
    </reaction>
</comment>
<comment type="cofactor">
    <cofactor evidence="1">
        <name>[4Fe-4S] cluster</name>
        <dbReference type="ChEBI" id="CHEBI:49883"/>
    </cofactor>
    <text evidence="1">Binds 2 [4Fe-4S] clusters per subunit.</text>
</comment>
<comment type="subunit">
    <text evidence="1">NDH-1 is composed of at least 11 different subunits.</text>
</comment>
<comment type="subcellular location">
    <subcellularLocation>
        <location evidence="1">Cellular thylakoid membrane</location>
        <topology evidence="1">Peripheral membrane protein</topology>
    </subcellularLocation>
</comment>
<comment type="similarity">
    <text evidence="1">Belongs to the complex I 23 kDa subunit family.</text>
</comment>
<dbReference type="EC" id="7.1.1.-" evidence="1"/>
<dbReference type="EMBL" id="X62517">
    <property type="protein sequence ID" value="CAA44375.1"/>
    <property type="molecule type" value="Genomic_DNA"/>
</dbReference>
<dbReference type="EMBL" id="BA000022">
    <property type="protein sequence ID" value="BAA10884.1"/>
    <property type="molecule type" value="Genomic_DNA"/>
</dbReference>
<dbReference type="PIR" id="S27973">
    <property type="entry name" value="FEYBQI"/>
</dbReference>
<dbReference type="SMR" id="P26525"/>
<dbReference type="IntAct" id="P26525">
    <property type="interactions" value="5"/>
</dbReference>
<dbReference type="STRING" id="1148.gene:10500390"/>
<dbReference type="PaxDb" id="1148-1001394"/>
<dbReference type="EnsemblBacteria" id="BAA10884">
    <property type="protein sequence ID" value="BAA10884"/>
    <property type="gene ID" value="BAA10884"/>
</dbReference>
<dbReference type="KEGG" id="syn:sll0520"/>
<dbReference type="eggNOG" id="COG1143">
    <property type="taxonomic scope" value="Bacteria"/>
</dbReference>
<dbReference type="InParanoid" id="P26525"/>
<dbReference type="PhylomeDB" id="P26525"/>
<dbReference type="Proteomes" id="UP000001425">
    <property type="component" value="Chromosome"/>
</dbReference>
<dbReference type="GO" id="GO:0031676">
    <property type="term" value="C:plasma membrane-derived thylakoid membrane"/>
    <property type="evidence" value="ECO:0007669"/>
    <property type="project" value="UniProtKB-SubCell"/>
</dbReference>
<dbReference type="GO" id="GO:0051539">
    <property type="term" value="F:4 iron, 4 sulfur cluster binding"/>
    <property type="evidence" value="ECO:0007669"/>
    <property type="project" value="UniProtKB-KW"/>
</dbReference>
<dbReference type="GO" id="GO:0005506">
    <property type="term" value="F:iron ion binding"/>
    <property type="evidence" value="ECO:0007669"/>
    <property type="project" value="UniProtKB-UniRule"/>
</dbReference>
<dbReference type="GO" id="GO:0008137">
    <property type="term" value="F:NADH dehydrogenase (ubiquinone) activity"/>
    <property type="evidence" value="ECO:0007669"/>
    <property type="project" value="InterPro"/>
</dbReference>
<dbReference type="GO" id="GO:0048038">
    <property type="term" value="F:quinone binding"/>
    <property type="evidence" value="ECO:0007669"/>
    <property type="project" value="UniProtKB-KW"/>
</dbReference>
<dbReference type="GO" id="GO:0019684">
    <property type="term" value="P:photosynthesis, light reaction"/>
    <property type="evidence" value="ECO:0007669"/>
    <property type="project" value="UniProtKB-UniRule"/>
</dbReference>
<dbReference type="Gene3D" id="3.30.70.3270">
    <property type="match status" value="1"/>
</dbReference>
<dbReference type="HAMAP" id="MF_01351">
    <property type="entry name" value="NDH1_NuoI"/>
    <property type="match status" value="1"/>
</dbReference>
<dbReference type="InterPro" id="IPR017896">
    <property type="entry name" value="4Fe4S_Fe-S-bd"/>
</dbReference>
<dbReference type="InterPro" id="IPR017900">
    <property type="entry name" value="4Fe4S_Fe_S_CS"/>
</dbReference>
<dbReference type="InterPro" id="IPR010226">
    <property type="entry name" value="NADH_quinone_OxRdtase_chainI"/>
</dbReference>
<dbReference type="InterPro" id="IPR004497">
    <property type="entry name" value="NDHI"/>
</dbReference>
<dbReference type="NCBIfam" id="TIGR00403">
    <property type="entry name" value="ndhI"/>
    <property type="match status" value="1"/>
</dbReference>
<dbReference type="NCBIfam" id="TIGR01971">
    <property type="entry name" value="NuoI"/>
    <property type="match status" value="1"/>
</dbReference>
<dbReference type="NCBIfam" id="NF004537">
    <property type="entry name" value="PRK05888.1-3"/>
    <property type="match status" value="1"/>
</dbReference>
<dbReference type="PANTHER" id="PTHR47275">
    <property type="entry name" value="NAD(P)H-QUINONE OXIDOREDUCTASE SUBUNIT I, CHLOROPLASTIC"/>
    <property type="match status" value="1"/>
</dbReference>
<dbReference type="PANTHER" id="PTHR47275:SF1">
    <property type="entry name" value="NAD(P)H-QUINONE OXIDOREDUCTASE SUBUNIT I, CHLOROPLASTIC"/>
    <property type="match status" value="1"/>
</dbReference>
<dbReference type="Pfam" id="PF12838">
    <property type="entry name" value="Fer4_7"/>
    <property type="match status" value="1"/>
</dbReference>
<dbReference type="SUPFAM" id="SSF54862">
    <property type="entry name" value="4Fe-4S ferredoxins"/>
    <property type="match status" value="1"/>
</dbReference>
<dbReference type="PROSITE" id="PS00198">
    <property type="entry name" value="4FE4S_FER_1"/>
    <property type="match status" value="2"/>
</dbReference>
<dbReference type="PROSITE" id="PS51379">
    <property type="entry name" value="4FE4S_FER_2"/>
    <property type="match status" value="2"/>
</dbReference>
<organism>
    <name type="scientific">Synechocystis sp. (strain ATCC 27184 / PCC 6803 / Kazusa)</name>
    <dbReference type="NCBI Taxonomy" id="1111708"/>
    <lineage>
        <taxon>Bacteria</taxon>
        <taxon>Bacillati</taxon>
        <taxon>Cyanobacteriota</taxon>
        <taxon>Cyanophyceae</taxon>
        <taxon>Synechococcales</taxon>
        <taxon>Merismopediaceae</taxon>
        <taxon>Synechocystis</taxon>
    </lineage>
</organism>
<protein>
    <recommendedName>
        <fullName evidence="1">NAD(P)H-quinone oxidoreductase subunit I</fullName>
        <ecNumber evidence="1">7.1.1.-</ecNumber>
    </recommendedName>
    <alternativeName>
        <fullName evidence="1">NAD(P)H dehydrogenase I subunit I</fullName>
    </alternativeName>
    <alternativeName>
        <fullName evidence="1">NDH-1 subunit I</fullName>
        <shortName evidence="1">NDH-I</shortName>
    </alternativeName>
</protein>
<keyword id="KW-0004">4Fe-4S</keyword>
<keyword id="KW-0903">Direct protein sequencing</keyword>
<keyword id="KW-0408">Iron</keyword>
<keyword id="KW-0411">Iron-sulfur</keyword>
<keyword id="KW-0472">Membrane</keyword>
<keyword id="KW-0479">Metal-binding</keyword>
<keyword id="KW-0520">NAD</keyword>
<keyword id="KW-0521">NADP</keyword>
<keyword id="KW-0618">Plastoquinone</keyword>
<keyword id="KW-0874">Quinone</keyword>
<keyword id="KW-1185">Reference proteome</keyword>
<keyword id="KW-0677">Repeat</keyword>
<keyword id="KW-0793">Thylakoid</keyword>
<keyword id="KW-1278">Translocase</keyword>
<evidence type="ECO:0000255" key="1">
    <source>
        <dbReference type="HAMAP-Rule" id="MF_01351"/>
    </source>
</evidence>
<evidence type="ECO:0000256" key="2">
    <source>
        <dbReference type="SAM" id="MobiDB-lite"/>
    </source>
</evidence>
<proteinExistence type="evidence at protein level"/>